<reference key="1">
    <citation type="journal article" date="2001" name="J. Mol. Biol.">
        <title>Identification of muscle specific ring finger proteins as potential regulators of the titin kinase domain.</title>
        <authorList>
            <person name="Centner T."/>
            <person name="Yano J."/>
            <person name="Kimura E."/>
            <person name="McElhinny A.S."/>
            <person name="Pelin K."/>
            <person name="Witt C.C."/>
            <person name="Bang M.-L."/>
            <person name="Trombitas K."/>
            <person name="Granzier H."/>
            <person name="Gregorio C.C."/>
            <person name="Sorimachi H."/>
            <person name="Labeit S."/>
        </authorList>
    </citation>
    <scope>NUCLEOTIDE SEQUENCE [MRNA] (ISOFORMS 1 AND 2)</scope>
    <scope>TISSUE SPECIFICITY</scope>
    <scope>INTERACTION WITH TRIM63 AND TRIM54</scope>
    <source>
        <tissue>Heart</tissue>
    </source>
</reference>
<reference key="2">
    <citation type="journal article" date="2002" name="J. Cell Sci.">
        <title>Transient association of titin and myosin with microtubules in nascent myofibrils directed by the MURF2 RING-finger protein.</title>
        <authorList>
            <person name="Pizon V."/>
            <person name="Iakovenko A."/>
            <person name="van der Ven P.F.M."/>
            <person name="Kelly R."/>
            <person name="Fatu C."/>
            <person name="Fuerst D.O."/>
            <person name="Karsenti E."/>
            <person name="Gautel M."/>
        </authorList>
    </citation>
    <scope>NUCLEOTIDE SEQUENCE [MRNA] (ISOFORMS 1; 2; 3 AND 4)</scope>
    <scope>OLIGOMERIZATION</scope>
    <scope>INTERACTION WITH TTN AND MYOSIN</scope>
    <source>
        <tissue>Heart muscle</tissue>
        <tissue>Skeletal muscle</tissue>
    </source>
</reference>
<reference key="3">
    <citation type="journal article" date="2004" name="Nat. Genet.">
        <title>Complete sequencing and characterization of 21,243 full-length human cDNAs.</title>
        <authorList>
            <person name="Ota T."/>
            <person name="Suzuki Y."/>
            <person name="Nishikawa T."/>
            <person name="Otsuki T."/>
            <person name="Sugiyama T."/>
            <person name="Irie R."/>
            <person name="Wakamatsu A."/>
            <person name="Hayashi K."/>
            <person name="Sato H."/>
            <person name="Nagai K."/>
            <person name="Kimura K."/>
            <person name="Makita H."/>
            <person name="Sekine M."/>
            <person name="Obayashi M."/>
            <person name="Nishi T."/>
            <person name="Shibahara T."/>
            <person name="Tanaka T."/>
            <person name="Ishii S."/>
            <person name="Yamamoto J."/>
            <person name="Saito K."/>
            <person name="Kawai Y."/>
            <person name="Isono Y."/>
            <person name="Nakamura Y."/>
            <person name="Nagahari K."/>
            <person name="Murakami K."/>
            <person name="Yasuda T."/>
            <person name="Iwayanagi T."/>
            <person name="Wagatsuma M."/>
            <person name="Shiratori A."/>
            <person name="Sudo H."/>
            <person name="Hosoiri T."/>
            <person name="Kaku Y."/>
            <person name="Kodaira H."/>
            <person name="Kondo H."/>
            <person name="Sugawara M."/>
            <person name="Takahashi M."/>
            <person name="Kanda K."/>
            <person name="Yokoi T."/>
            <person name="Furuya T."/>
            <person name="Kikkawa E."/>
            <person name="Omura Y."/>
            <person name="Abe K."/>
            <person name="Kamihara K."/>
            <person name="Katsuta N."/>
            <person name="Sato K."/>
            <person name="Tanikawa M."/>
            <person name="Yamazaki M."/>
            <person name="Ninomiya K."/>
            <person name="Ishibashi T."/>
            <person name="Yamashita H."/>
            <person name="Murakawa K."/>
            <person name="Fujimori K."/>
            <person name="Tanai H."/>
            <person name="Kimata M."/>
            <person name="Watanabe M."/>
            <person name="Hiraoka S."/>
            <person name="Chiba Y."/>
            <person name="Ishida S."/>
            <person name="Ono Y."/>
            <person name="Takiguchi S."/>
            <person name="Watanabe S."/>
            <person name="Yosida M."/>
            <person name="Hotuta T."/>
            <person name="Kusano J."/>
            <person name="Kanehori K."/>
            <person name="Takahashi-Fujii A."/>
            <person name="Hara H."/>
            <person name="Tanase T.-O."/>
            <person name="Nomura Y."/>
            <person name="Togiya S."/>
            <person name="Komai F."/>
            <person name="Hara R."/>
            <person name="Takeuchi K."/>
            <person name="Arita M."/>
            <person name="Imose N."/>
            <person name="Musashino K."/>
            <person name="Yuuki H."/>
            <person name="Oshima A."/>
            <person name="Sasaki N."/>
            <person name="Aotsuka S."/>
            <person name="Yoshikawa Y."/>
            <person name="Matsunawa H."/>
            <person name="Ichihara T."/>
            <person name="Shiohata N."/>
            <person name="Sano S."/>
            <person name="Moriya S."/>
            <person name="Momiyama H."/>
            <person name="Satoh N."/>
            <person name="Takami S."/>
            <person name="Terashima Y."/>
            <person name="Suzuki O."/>
            <person name="Nakagawa S."/>
            <person name="Senoh A."/>
            <person name="Mizoguchi H."/>
            <person name="Goto Y."/>
            <person name="Shimizu F."/>
            <person name="Wakebe H."/>
            <person name="Hishigaki H."/>
            <person name="Watanabe T."/>
            <person name="Sugiyama A."/>
            <person name="Takemoto M."/>
            <person name="Kawakami B."/>
            <person name="Yamazaki M."/>
            <person name="Watanabe K."/>
            <person name="Kumagai A."/>
            <person name="Itakura S."/>
            <person name="Fukuzumi Y."/>
            <person name="Fujimori Y."/>
            <person name="Komiyama M."/>
            <person name="Tashiro H."/>
            <person name="Tanigami A."/>
            <person name="Fujiwara T."/>
            <person name="Ono T."/>
            <person name="Yamada K."/>
            <person name="Fujii Y."/>
            <person name="Ozaki K."/>
            <person name="Hirao M."/>
            <person name="Ohmori Y."/>
            <person name="Kawabata A."/>
            <person name="Hikiji T."/>
            <person name="Kobatake N."/>
            <person name="Inagaki H."/>
            <person name="Ikema Y."/>
            <person name="Okamoto S."/>
            <person name="Okitani R."/>
            <person name="Kawakami T."/>
            <person name="Noguchi S."/>
            <person name="Itoh T."/>
            <person name="Shigeta K."/>
            <person name="Senba T."/>
            <person name="Matsumura K."/>
            <person name="Nakajima Y."/>
            <person name="Mizuno T."/>
            <person name="Morinaga M."/>
            <person name="Sasaki M."/>
            <person name="Togashi T."/>
            <person name="Oyama M."/>
            <person name="Hata H."/>
            <person name="Watanabe M."/>
            <person name="Komatsu T."/>
            <person name="Mizushima-Sugano J."/>
            <person name="Satoh T."/>
            <person name="Shirai Y."/>
            <person name="Takahashi Y."/>
            <person name="Nakagawa K."/>
            <person name="Okumura K."/>
            <person name="Nagase T."/>
            <person name="Nomura N."/>
            <person name="Kikuchi H."/>
            <person name="Masuho Y."/>
            <person name="Yamashita R."/>
            <person name="Nakai K."/>
            <person name="Yada T."/>
            <person name="Nakamura Y."/>
            <person name="Ohara O."/>
            <person name="Isogai T."/>
            <person name="Sugano S."/>
        </authorList>
    </citation>
    <scope>NUCLEOTIDE SEQUENCE [LARGE SCALE MRNA] (ISOFORMS 1 AND 2)</scope>
    <source>
        <tissue>Heart</tissue>
    </source>
</reference>
<reference key="4">
    <citation type="submission" date="2005-07" db="EMBL/GenBank/DDBJ databases">
        <authorList>
            <person name="Mural R.J."/>
            <person name="Istrail S."/>
            <person name="Sutton G.G."/>
            <person name="Florea L."/>
            <person name="Halpern A.L."/>
            <person name="Mobarry C.M."/>
            <person name="Lippert R."/>
            <person name="Walenz B."/>
            <person name="Shatkay H."/>
            <person name="Dew I."/>
            <person name="Miller J.R."/>
            <person name="Flanigan M.J."/>
            <person name="Edwards N.J."/>
            <person name="Bolanos R."/>
            <person name="Fasulo D."/>
            <person name="Halldorsson B.V."/>
            <person name="Hannenhalli S."/>
            <person name="Turner R."/>
            <person name="Yooseph S."/>
            <person name="Lu F."/>
            <person name="Nusskern D.R."/>
            <person name="Shue B.C."/>
            <person name="Zheng X.H."/>
            <person name="Zhong F."/>
            <person name="Delcher A.L."/>
            <person name="Huson D.H."/>
            <person name="Kravitz S.A."/>
            <person name="Mouchard L."/>
            <person name="Reinert K."/>
            <person name="Remington K.A."/>
            <person name="Clark A.G."/>
            <person name="Waterman M.S."/>
            <person name="Eichler E.E."/>
            <person name="Adams M.D."/>
            <person name="Hunkapiller M.W."/>
            <person name="Myers E.W."/>
            <person name="Venter J.C."/>
        </authorList>
    </citation>
    <scope>NUCLEOTIDE SEQUENCE [LARGE SCALE GENOMIC DNA]</scope>
</reference>
<reference key="5">
    <citation type="journal article" date="2004" name="Genome Res.">
        <title>The status, quality, and expansion of the NIH full-length cDNA project: the Mammalian Gene Collection (MGC).</title>
        <authorList>
            <consortium name="The MGC Project Team"/>
        </authorList>
    </citation>
    <scope>NUCLEOTIDE SEQUENCE [LARGE SCALE MRNA] (ISOFORM 2)</scope>
    <source>
        <tissue>Muscle</tissue>
    </source>
</reference>
<reference key="6">
    <citation type="submission" date="2003-05" db="EMBL/GenBank/DDBJ databases">
        <title>Cloning of human full-length CDSs in BD Creator(TM) system donor vector.</title>
        <authorList>
            <person name="Kalnine N."/>
            <person name="Chen X."/>
            <person name="Rolfs A."/>
            <person name="Halleck A."/>
            <person name="Hines L."/>
            <person name="Eisenstein S."/>
            <person name="Koundinya M."/>
            <person name="Raphael J."/>
            <person name="Moreira D."/>
            <person name="Kelley T."/>
            <person name="LaBaer J."/>
            <person name="Lin Y."/>
            <person name="Phelan M."/>
            <person name="Farmer A."/>
        </authorList>
    </citation>
    <scope>NUCLEOTIDE SEQUENCE [LARGE SCALE MRNA] OF 17-548 (ISOFORM 2)</scope>
</reference>
<reference key="7">
    <citation type="journal article" date="2005" name="Science">
        <title>The kinase domain of titin controls muscle gene expression and protein turnover.</title>
        <authorList>
            <person name="Lange S."/>
            <person name="Xiang F."/>
            <person name="Yakovenko A."/>
            <person name="Vihola A."/>
            <person name="Hackman P."/>
            <person name="Rostkova E."/>
            <person name="Kristensen J."/>
            <person name="Brandmeier B."/>
            <person name="Franzen G."/>
            <person name="Hedberg B."/>
            <person name="Gunnarsson L.G."/>
            <person name="Hughes S.M."/>
            <person name="Marchand S."/>
            <person name="Sejersen T."/>
            <person name="Richard I."/>
            <person name="Edstroem L."/>
            <person name="Ehler E."/>
            <person name="Udd B."/>
            <person name="Gautel M."/>
        </authorList>
    </citation>
    <scope>INTERACTION WITH TTN; SQSTM1 AND NBR1</scope>
</reference>
<reference key="8">
    <citation type="journal article" date="2023" name="Biochem. Cell Biol.">
        <title>SUMO-3 promotes the ubiquitin-dependent turnover of TRIM55.</title>
        <authorList>
            <person name="Hammami N.E.H."/>
            <person name="Merindol N."/>
            <person name="Plourde M."/>
            <person name="Maisonnet T."/>
            <person name="Lebel S."/>
            <person name="Berthoux L."/>
        </authorList>
    </citation>
    <scope>SUMOYLATION</scope>
    <scope>SUBCELLULAR LOCATION</scope>
</reference>
<reference key="9">
    <citation type="journal article" date="2023" name="Sci. Rep.">
        <title>Lysine 222 in PPAR gamma1 functions as the key site of MuRF2-mediated ubiquitination modification.</title>
        <authorList>
            <person name="Fan Y."/>
            <person name="Xu F."/>
            <person name="Wang R."/>
            <person name="He J."/>
        </authorList>
    </citation>
    <scope>FUNCTION</scope>
    <scope>CATALYTIC ACTIVITY</scope>
</reference>
<reference key="10">
    <citation type="journal article" date="2023" name="Sci. Signal.">
        <title>TRIM55 promotes noncanonical NF-kappaB signaling and B cell-mediated immune responses by coordinating p100 ubiquitination and processing.</title>
        <authorList>
            <person name="Lin L."/>
            <person name="Yu H."/>
            <person name="Li L."/>
            <person name="Yang W."/>
            <person name="Chen X."/>
            <person name="Gong Y."/>
            <person name="Lei Q."/>
            <person name="Li Z."/>
            <person name="Zhou Z."/>
            <person name="Dai L."/>
            <person name="Zhang H."/>
            <person name="Hu H."/>
        </authorList>
    </citation>
    <scope>FUNCTION</scope>
    <scope>CATALYTIC ACTIVITY</scope>
</reference>
<reference key="11">
    <citation type="journal article" date="2014" name="Int. J. Mol. Sci.">
        <title>Rare variants in genes encoding MuRF1 and MuRF2 are modifiers of hypertrophic cardiomyopathy.</title>
        <authorList>
            <person name="Su M."/>
            <person name="Wang J."/>
            <person name="Kang L."/>
            <person name="Wang Y."/>
            <person name="Zou Y."/>
            <person name="Feng X."/>
            <person name="Wang D."/>
            <person name="Ahmad F."/>
            <person name="Zhou X."/>
            <person name="Hui R."/>
            <person name="Song L."/>
        </authorList>
    </citation>
    <scope>VARIANTS TYR-50; VAL-54; ALA-79; MET-241; PHE-252; LYS-257; ILE-258; GLN-336; ARG-343; THR-392; ILE-418; ASN-452; LEU-458; THR-488 AND SER-506</scope>
    <scope>VARIANT ARG-523 (ISOFORM 3)</scope>
</reference>
<accession>Q9BYV6</accession>
<accession>B3KRC0</accession>
<accession>B3KRJ3</accession>
<accession>Q53XX3</accession>
<accession>Q8IUD9</accession>
<accession>Q8IUE4</accession>
<accession>Q96DV2</accession>
<accession>Q96DV3</accession>
<accession>Q9BYV5</accession>
<evidence type="ECO:0000250" key="1">
    <source>
        <dbReference type="UniProtKB" id="G3X8Y1"/>
    </source>
</evidence>
<evidence type="ECO:0000255" key="2"/>
<evidence type="ECO:0000255" key="3">
    <source>
        <dbReference type="PROSITE-ProRule" id="PRU00024"/>
    </source>
</evidence>
<evidence type="ECO:0000255" key="4">
    <source>
        <dbReference type="PROSITE-ProRule" id="PRU00175"/>
    </source>
</evidence>
<evidence type="ECO:0000255" key="5">
    <source>
        <dbReference type="PROSITE-ProRule" id="PRU00586"/>
    </source>
</evidence>
<evidence type="ECO:0000256" key="6">
    <source>
        <dbReference type="SAM" id="MobiDB-lite"/>
    </source>
</evidence>
<evidence type="ECO:0000269" key="7">
    <source>
    </source>
</evidence>
<evidence type="ECO:0000269" key="8">
    <source>
    </source>
</evidence>
<evidence type="ECO:0000269" key="9">
    <source>
    </source>
</evidence>
<evidence type="ECO:0000269" key="10">
    <source>
    </source>
</evidence>
<evidence type="ECO:0000269" key="11">
    <source>
    </source>
</evidence>
<evidence type="ECO:0000269" key="12">
    <source>
    </source>
</evidence>
<evidence type="ECO:0000269" key="13">
    <source>
    </source>
</evidence>
<evidence type="ECO:0000303" key="14">
    <source>
    </source>
</evidence>
<evidence type="ECO:0000303" key="15">
    <source>
    </source>
</evidence>
<evidence type="ECO:0000303" key="16">
    <source>
    </source>
</evidence>
<evidence type="ECO:0000303" key="17">
    <source>
    </source>
</evidence>
<evidence type="ECO:0000303" key="18">
    <source ref="6"/>
</evidence>
<evidence type="ECO:0000305" key="19"/>
<proteinExistence type="evidence at protein level"/>
<organism>
    <name type="scientific">Homo sapiens</name>
    <name type="common">Human</name>
    <dbReference type="NCBI Taxonomy" id="9606"/>
    <lineage>
        <taxon>Eukaryota</taxon>
        <taxon>Metazoa</taxon>
        <taxon>Chordata</taxon>
        <taxon>Craniata</taxon>
        <taxon>Vertebrata</taxon>
        <taxon>Euteleostomi</taxon>
        <taxon>Mammalia</taxon>
        <taxon>Eutheria</taxon>
        <taxon>Euarchontoglires</taxon>
        <taxon>Primates</taxon>
        <taxon>Haplorrhini</taxon>
        <taxon>Catarrhini</taxon>
        <taxon>Hominidae</taxon>
        <taxon>Homo</taxon>
    </lineage>
</organism>
<comment type="function">
    <text evidence="1 11 13">E3 ubiquitin ligase that plays an important role in regulating cardiac development and contractility, muscle growth, metabolism, and fiber-type differentiation. Acts as a critical factor that regulates cardiomyocyte size during development in concert with TRIM63 by regulating E2F1-mediated gene expression (By similarity). Plays a role in apoptosis induction in cardiomyocytes by promoting ubiquitination of the DUSP1 phosphatase. Promotes non-canonical NF-kappa-B signaling and B-cell-mediated immune responses by mediating NFKB2 'Lys-48'-linked ubiquitination and processing. In turn, NFKB2 is further processed by valosin-containing protein/VCP, an ATPase that mediates ubiquitin-dependent protein degradation by the proteasome. May play a role in preventing macrophages from producing inflammatory factors and migrating by downregulating the level of nuclear NF-kappa-B subunit RELA. Also modifies PPARG via polyubiquitination and accelerates PPARG proteasomal degradation to inhibit its activity (PubMed:36737649).</text>
</comment>
<comment type="catalytic activity">
    <reaction evidence="11 13">
        <text>S-ubiquitinyl-[E2 ubiquitin-conjugating enzyme]-L-cysteine + [acceptor protein]-L-lysine = [E2 ubiquitin-conjugating enzyme]-L-cysteine + N(6)-ubiquitinyl-[acceptor protein]-L-lysine.</text>
        <dbReference type="EC" id="2.3.2.27"/>
    </reaction>
</comment>
<comment type="subunit">
    <text evidence="7 8 9 19">Homooligomer and heterooligomer (Probable). Interacts with titin/TTN. Interacts with myosins. Interacts with SQSTM1 and NBR1. Isoform 4 may not able to interact with isoform 1, isoform 2 and isoform 3. Probably interacts with TRIM63 and TRIM54.</text>
</comment>
<comment type="interaction">
    <interactant intactId="EBI-2341179">
        <id>Q9BYV6</id>
    </interactant>
    <interactant intactId="EBI-740098">
        <id>P36406</id>
        <label>TRIM23</label>
    </interactant>
    <organismsDiffer>false</organismsDiffer>
    <experiments>2</experiments>
</comment>
<comment type="interaction">
    <interactant intactId="EBI-2341179">
        <id>Q9BYV6</id>
    </interactant>
    <interactant intactId="EBI-2341179">
        <id>Q9BYV6</id>
        <label>TRIM55</label>
    </interactant>
    <organismsDiffer>false</organismsDiffer>
    <experiments>2</experiments>
</comment>
<comment type="interaction">
    <interactant intactId="EBI-2341179">
        <id>Q9BYV6</id>
    </interactant>
    <interactant intactId="EBI-714351">
        <id>Q92995</id>
        <label>USP13</label>
    </interactant>
    <organismsDiffer>false</organismsDiffer>
    <experiments>2</experiments>
</comment>
<comment type="interaction">
    <interactant intactId="EBI-11522718">
        <id>Q9BYV6-2</id>
    </interactant>
    <interactant intactId="EBI-358049">
        <id>Q13895</id>
        <label>BYSL</label>
    </interactant>
    <organismsDiffer>false</organismsDiffer>
    <experiments>3</experiments>
</comment>
<comment type="interaction">
    <interactant intactId="EBI-11522718">
        <id>Q9BYV6-2</id>
    </interactant>
    <interactant intactId="EBI-746453">
        <id>P54725</id>
        <label>RAD23A</label>
    </interactant>
    <organismsDiffer>false</organismsDiffer>
    <experiments>3</experiments>
</comment>
<comment type="subcellular location">
    <subcellularLocation>
        <location evidence="1">Nucleus</location>
    </subcellularLocation>
    <subcellularLocation>
        <location evidence="1">Cytoplasm</location>
    </subcellularLocation>
    <text evidence="1">TLR4 signaling pathway promotes nuclear translocation.</text>
</comment>
<comment type="alternative products">
    <event type="alternative splicing"/>
    <isoform>
        <id>Q9BYV6-1</id>
        <name>1</name>
        <name>p60</name>
        <sequence type="displayed"/>
    </isoform>
    <isoform>
        <id>Q9BYV6-2</id>
        <name>2</name>
        <name>p50</name>
        <sequence type="described" ref="VSP_015997"/>
    </isoform>
    <isoform>
        <id>Q9BYV6-3</id>
        <name>3</name>
        <name>p60B</name>
        <sequence type="described" ref="VSP_015998"/>
    </isoform>
    <isoform>
        <id>Q9BYV6-4</id>
        <name>4</name>
        <name>p27</name>
        <sequence type="described" ref="VSP_015996"/>
    </isoform>
</comment>
<comment type="tissue specificity">
    <text evidence="7">Highly expressed in muscle. Low-level expression in liver.</text>
</comment>
<comment type="PTM">
    <text evidence="12">Targeted for degradation through the proteasomal and lysosomal pathways in the presence of SUMO3.</text>
</comment>
<comment type="caution">
    <text evidence="19">It is uncertain whether Met-1 or Met-17 is the initiator.</text>
</comment>
<comment type="sequence caution" evidence="19">
    <conflict type="erroneous initiation">
        <sequence resource="EMBL-CDS" id="AAP35876"/>
    </conflict>
</comment>
<comment type="sequence caution" evidence="19">
    <conflict type="erroneous initiation">
        <sequence resource="EMBL-CDS" id="CAC32839"/>
    </conflict>
</comment>
<comment type="sequence caution" evidence="19">
    <conflict type="erroneous initiation">
        <sequence resource="EMBL-CDS" id="CAC32840"/>
    </conflict>
</comment>
<dbReference type="EC" id="2.3.2.27" evidence="11 13"/>
<dbReference type="EMBL" id="AJ291712">
    <property type="protein sequence ID" value="CAC32839.1"/>
    <property type="status" value="ALT_INIT"/>
    <property type="molecule type" value="mRNA"/>
</dbReference>
<dbReference type="EMBL" id="AJ291712">
    <property type="protein sequence ID" value="CAC32840.1"/>
    <property type="status" value="ALT_INIT"/>
    <property type="molecule type" value="mRNA"/>
</dbReference>
<dbReference type="EMBL" id="AJ243488">
    <property type="protein sequence ID" value="CAC43019.1"/>
    <property type="molecule type" value="mRNA"/>
</dbReference>
<dbReference type="EMBL" id="AJ243489">
    <property type="protein sequence ID" value="CAC43020.1"/>
    <property type="molecule type" value="mRNA"/>
</dbReference>
<dbReference type="EMBL" id="AJ277493">
    <property type="protein sequence ID" value="CAC81835.1"/>
    <property type="molecule type" value="mRNA"/>
</dbReference>
<dbReference type="EMBL" id="AJ431704">
    <property type="protein sequence ID" value="CAD24432.1"/>
    <property type="molecule type" value="mRNA"/>
</dbReference>
<dbReference type="EMBL" id="AK091310">
    <property type="protein sequence ID" value="BAG52332.1"/>
    <property type="molecule type" value="mRNA"/>
</dbReference>
<dbReference type="EMBL" id="AK091728">
    <property type="protein sequence ID" value="BAG52405.1"/>
    <property type="molecule type" value="mRNA"/>
</dbReference>
<dbReference type="EMBL" id="CH471068">
    <property type="protein sequence ID" value="EAW86894.1"/>
    <property type="molecule type" value="Genomic_DNA"/>
</dbReference>
<dbReference type="EMBL" id="CH471068">
    <property type="protein sequence ID" value="EAW86895.1"/>
    <property type="molecule type" value="Genomic_DNA"/>
</dbReference>
<dbReference type="EMBL" id="BC007750">
    <property type="protein sequence ID" value="AAH07750.2"/>
    <property type="molecule type" value="mRNA"/>
</dbReference>
<dbReference type="EMBL" id="BT007212">
    <property type="protein sequence ID" value="AAP35876.1"/>
    <property type="status" value="ALT_INIT"/>
    <property type="molecule type" value="mRNA"/>
</dbReference>
<dbReference type="CCDS" id="CCDS6184.1">
    <molecule id="Q9BYV6-1"/>
</dbReference>
<dbReference type="CCDS" id="CCDS6185.1">
    <molecule id="Q9BYV6-2"/>
</dbReference>
<dbReference type="CCDS" id="CCDS6186.1">
    <molecule id="Q9BYV6-4"/>
</dbReference>
<dbReference type="CCDS" id="CCDS6187.1">
    <molecule id="Q9BYV6-3"/>
</dbReference>
<dbReference type="RefSeq" id="NP_149047.2">
    <molecule id="Q9BYV6-3"/>
    <property type="nucleotide sequence ID" value="NM_033058.2"/>
</dbReference>
<dbReference type="RefSeq" id="NP_908973.1">
    <molecule id="Q9BYV6-1"/>
    <property type="nucleotide sequence ID" value="NM_184085.2"/>
</dbReference>
<dbReference type="RefSeq" id="NP_908974.1">
    <molecule id="Q9BYV6-2"/>
    <property type="nucleotide sequence ID" value="NM_184086.2"/>
</dbReference>
<dbReference type="RefSeq" id="NP_908975.1">
    <molecule id="Q9BYV6-4"/>
    <property type="nucleotide sequence ID" value="NM_184087.2"/>
</dbReference>
<dbReference type="RefSeq" id="XP_011515915.1">
    <property type="nucleotide sequence ID" value="XM_011517613.2"/>
</dbReference>
<dbReference type="RefSeq" id="XP_011515916.1">
    <property type="nucleotide sequence ID" value="XM_011517614.2"/>
</dbReference>
<dbReference type="RefSeq" id="XP_011515917.1">
    <property type="nucleotide sequence ID" value="XM_011517615.2"/>
</dbReference>
<dbReference type="RefSeq" id="XP_011515918.1">
    <property type="nucleotide sequence ID" value="XM_011517616.2"/>
</dbReference>
<dbReference type="RefSeq" id="XP_054217335.1">
    <molecule id="Q9BYV6-1"/>
    <property type="nucleotide sequence ID" value="XM_054361360.1"/>
</dbReference>
<dbReference type="RefSeq" id="XP_054217336.1">
    <molecule id="Q9BYV6-1"/>
    <property type="nucleotide sequence ID" value="XM_054361361.1"/>
</dbReference>
<dbReference type="RefSeq" id="XP_054217337.1">
    <molecule id="Q9BYV6-1"/>
    <property type="nucleotide sequence ID" value="XM_054361362.1"/>
</dbReference>
<dbReference type="RefSeq" id="XP_054217338.1">
    <molecule id="Q9BYV6-1"/>
    <property type="nucleotide sequence ID" value="XM_054361363.1"/>
</dbReference>
<dbReference type="RefSeq" id="XP_054217340.1">
    <molecule id="Q9BYV6-3"/>
    <property type="nucleotide sequence ID" value="XM_054361365.1"/>
</dbReference>
<dbReference type="RefSeq" id="XP_054217342.1">
    <molecule id="Q9BYV6-2"/>
    <property type="nucleotide sequence ID" value="XM_054361367.1"/>
</dbReference>
<dbReference type="SMR" id="Q9BYV6"/>
<dbReference type="BioGRID" id="124194">
    <property type="interactions" value="349"/>
</dbReference>
<dbReference type="FunCoup" id="Q9BYV6">
    <property type="interactions" value="92"/>
</dbReference>
<dbReference type="IntAct" id="Q9BYV6">
    <property type="interactions" value="226"/>
</dbReference>
<dbReference type="MINT" id="Q9BYV6"/>
<dbReference type="STRING" id="9606.ENSP00000323913"/>
<dbReference type="GlyGen" id="Q9BYV6">
    <property type="glycosylation" value="2 sites, 1 O-linked glycan (1 site)"/>
</dbReference>
<dbReference type="iPTMnet" id="Q9BYV6"/>
<dbReference type="PhosphoSitePlus" id="Q9BYV6"/>
<dbReference type="BioMuta" id="TRIM55"/>
<dbReference type="DMDM" id="78099806"/>
<dbReference type="MassIVE" id="Q9BYV6"/>
<dbReference type="PaxDb" id="9606-ENSP00000323913"/>
<dbReference type="PeptideAtlas" id="Q9BYV6"/>
<dbReference type="ProteomicsDB" id="79714">
    <molecule id="Q9BYV6-1"/>
</dbReference>
<dbReference type="ProteomicsDB" id="79715">
    <molecule id="Q9BYV6-2"/>
</dbReference>
<dbReference type="ProteomicsDB" id="79716">
    <molecule id="Q9BYV6-3"/>
</dbReference>
<dbReference type="ProteomicsDB" id="79717">
    <molecule id="Q9BYV6-4"/>
</dbReference>
<dbReference type="Antibodypedia" id="24808">
    <property type="antibodies" value="174 antibodies from 28 providers"/>
</dbReference>
<dbReference type="DNASU" id="84675"/>
<dbReference type="Ensembl" id="ENST00000276573.11">
    <molecule id="Q9BYV6-3"/>
    <property type="protein sequence ID" value="ENSP00000276573.7"/>
    <property type="gene ID" value="ENSG00000147573.17"/>
</dbReference>
<dbReference type="Ensembl" id="ENST00000315962.9">
    <molecule id="Q9BYV6-1"/>
    <property type="protein sequence ID" value="ENSP00000323913.4"/>
    <property type="gene ID" value="ENSG00000147573.17"/>
</dbReference>
<dbReference type="Ensembl" id="ENST00000350034.4">
    <molecule id="Q9BYV6-4"/>
    <property type="protein sequence ID" value="ENSP00000332302.4"/>
    <property type="gene ID" value="ENSG00000147573.17"/>
</dbReference>
<dbReference type="Ensembl" id="ENST00000353317.9">
    <molecule id="Q9BYV6-2"/>
    <property type="protein sequence ID" value="ENSP00000297348.8"/>
    <property type="gene ID" value="ENSG00000147573.17"/>
</dbReference>
<dbReference type="GeneID" id="84675"/>
<dbReference type="KEGG" id="hsa:84675"/>
<dbReference type="MANE-Select" id="ENST00000315962.9">
    <property type="protein sequence ID" value="ENSP00000323913.4"/>
    <property type="RefSeq nucleotide sequence ID" value="NM_184085.2"/>
    <property type="RefSeq protein sequence ID" value="NP_908973.1"/>
</dbReference>
<dbReference type="UCSC" id="uc003xvu.4">
    <molecule id="Q9BYV6-1"/>
    <property type="organism name" value="human"/>
</dbReference>
<dbReference type="AGR" id="HGNC:14215"/>
<dbReference type="CTD" id="84675"/>
<dbReference type="DisGeNET" id="84675"/>
<dbReference type="GeneCards" id="TRIM55"/>
<dbReference type="HGNC" id="HGNC:14215">
    <property type="gene designation" value="TRIM55"/>
</dbReference>
<dbReference type="HPA" id="ENSG00000147573">
    <property type="expression patterns" value="Group enriched (heart muscle, liver, skeletal muscle, tongue)"/>
</dbReference>
<dbReference type="MIM" id="606469">
    <property type="type" value="gene"/>
</dbReference>
<dbReference type="neXtProt" id="NX_Q9BYV6"/>
<dbReference type="OpenTargets" id="ENSG00000147573"/>
<dbReference type="PharmGKB" id="PA34432"/>
<dbReference type="VEuPathDB" id="HostDB:ENSG00000147573"/>
<dbReference type="eggNOG" id="KOG2177">
    <property type="taxonomic scope" value="Eukaryota"/>
</dbReference>
<dbReference type="GeneTree" id="ENSGT00940000154004"/>
<dbReference type="HOGENOM" id="CLU_013137_5_3_1"/>
<dbReference type="InParanoid" id="Q9BYV6"/>
<dbReference type="OMA" id="CDIHEDE"/>
<dbReference type="OrthoDB" id="4788989at2759"/>
<dbReference type="PAN-GO" id="Q9BYV6">
    <property type="GO annotations" value="3 GO annotations based on evolutionary models"/>
</dbReference>
<dbReference type="PhylomeDB" id="Q9BYV6"/>
<dbReference type="TreeFam" id="TF331669"/>
<dbReference type="PathwayCommons" id="Q9BYV6"/>
<dbReference type="SignaLink" id="Q9BYV6"/>
<dbReference type="SIGNOR" id="Q9BYV6"/>
<dbReference type="BioGRID-ORCS" id="84675">
    <property type="hits" value="8 hits in 1190 CRISPR screens"/>
</dbReference>
<dbReference type="ChiTaRS" id="TRIM55">
    <property type="organism name" value="human"/>
</dbReference>
<dbReference type="GeneWiki" id="TRIM55"/>
<dbReference type="GenomeRNAi" id="84675"/>
<dbReference type="Pharos" id="Q9BYV6">
    <property type="development level" value="Tbio"/>
</dbReference>
<dbReference type="PRO" id="PR:Q9BYV6"/>
<dbReference type="Proteomes" id="UP000005640">
    <property type="component" value="Chromosome 8"/>
</dbReference>
<dbReference type="RNAct" id="Q9BYV6">
    <property type="molecule type" value="protein"/>
</dbReference>
<dbReference type="Bgee" id="ENSG00000147573">
    <property type="expression patterns" value="Expressed in right atrium auricular region and 106 other cell types or tissues"/>
</dbReference>
<dbReference type="GO" id="GO:0005737">
    <property type="term" value="C:cytoplasm"/>
    <property type="evidence" value="ECO:0000318"/>
    <property type="project" value="GO_Central"/>
</dbReference>
<dbReference type="GO" id="GO:0005874">
    <property type="term" value="C:microtubule"/>
    <property type="evidence" value="ECO:0000303"/>
    <property type="project" value="UniProtKB"/>
</dbReference>
<dbReference type="GO" id="GO:0005634">
    <property type="term" value="C:nucleus"/>
    <property type="evidence" value="ECO:0007669"/>
    <property type="project" value="UniProtKB-SubCell"/>
</dbReference>
<dbReference type="GO" id="GO:0042802">
    <property type="term" value="F:identical protein binding"/>
    <property type="evidence" value="ECO:0000353"/>
    <property type="project" value="IntAct"/>
</dbReference>
<dbReference type="GO" id="GO:0030674">
    <property type="term" value="F:protein-macromolecule adaptor activity"/>
    <property type="evidence" value="ECO:0000314"/>
    <property type="project" value="UniProt"/>
</dbReference>
<dbReference type="GO" id="GO:0061630">
    <property type="term" value="F:ubiquitin protein ligase activity"/>
    <property type="evidence" value="ECO:0000314"/>
    <property type="project" value="UniProt"/>
</dbReference>
<dbReference type="GO" id="GO:0008270">
    <property type="term" value="F:zinc ion binding"/>
    <property type="evidence" value="ECO:0007669"/>
    <property type="project" value="UniProtKB-KW"/>
</dbReference>
<dbReference type="GO" id="GO:0050904">
    <property type="term" value="P:diapedesis"/>
    <property type="evidence" value="ECO:0007669"/>
    <property type="project" value="Ensembl"/>
</dbReference>
<dbReference type="GO" id="GO:0045087">
    <property type="term" value="P:innate immune response"/>
    <property type="evidence" value="ECO:0000318"/>
    <property type="project" value="GO_Central"/>
</dbReference>
<dbReference type="GO" id="GO:0002523">
    <property type="term" value="P:leukocyte migration involved in inflammatory response"/>
    <property type="evidence" value="ECO:0007669"/>
    <property type="project" value="Ensembl"/>
</dbReference>
<dbReference type="GO" id="GO:1905517">
    <property type="term" value="P:macrophage migration"/>
    <property type="evidence" value="ECO:0007669"/>
    <property type="project" value="Ensembl"/>
</dbReference>
<dbReference type="GO" id="GO:1901224">
    <property type="term" value="P:positive regulation of non-canonical NF-kappaB signal transduction"/>
    <property type="evidence" value="ECO:0000314"/>
    <property type="project" value="UniProt"/>
</dbReference>
<dbReference type="GO" id="GO:0070936">
    <property type="term" value="P:protein K48-linked ubiquitination"/>
    <property type="evidence" value="ECO:0000314"/>
    <property type="project" value="UniProt"/>
</dbReference>
<dbReference type="GO" id="GO:0007165">
    <property type="term" value="P:signal transduction"/>
    <property type="evidence" value="ECO:0000303"/>
    <property type="project" value="UniProtKB"/>
</dbReference>
<dbReference type="CDD" id="cd19832">
    <property type="entry name" value="Bbox2_MuRF2_C-II"/>
    <property type="match status" value="1"/>
</dbReference>
<dbReference type="CDD" id="cd16760">
    <property type="entry name" value="RING-HC_MuRF2"/>
    <property type="match status" value="1"/>
</dbReference>
<dbReference type="FunFam" id="3.30.40.10:FF:000014">
    <property type="entry name" value="probable E3 ubiquitin-protein ligase MID2"/>
    <property type="match status" value="1"/>
</dbReference>
<dbReference type="FunFam" id="1.20.5.170:FF:000022">
    <property type="entry name" value="Tripartite motif containing 55"/>
    <property type="match status" value="1"/>
</dbReference>
<dbReference type="FunFam" id="3.30.160.60:FF:000140">
    <property type="entry name" value="Tripartite motif containing 55"/>
    <property type="match status" value="1"/>
</dbReference>
<dbReference type="Gene3D" id="1.20.5.170">
    <property type="match status" value="1"/>
</dbReference>
<dbReference type="Gene3D" id="3.30.160.60">
    <property type="entry name" value="Classic Zinc Finger"/>
    <property type="match status" value="1"/>
</dbReference>
<dbReference type="Gene3D" id="3.30.40.10">
    <property type="entry name" value="Zinc/RING finger domain, C3HC4 (zinc finger)"/>
    <property type="match status" value="1"/>
</dbReference>
<dbReference type="InterPro" id="IPR017903">
    <property type="entry name" value="COS_domain"/>
</dbReference>
<dbReference type="InterPro" id="IPR050617">
    <property type="entry name" value="E3_ligase_FN3/SPRY"/>
</dbReference>
<dbReference type="InterPro" id="IPR027370">
    <property type="entry name" value="Znf-RING_euk"/>
</dbReference>
<dbReference type="InterPro" id="IPR000315">
    <property type="entry name" value="Znf_B-box"/>
</dbReference>
<dbReference type="InterPro" id="IPR001841">
    <property type="entry name" value="Znf_RING"/>
</dbReference>
<dbReference type="InterPro" id="IPR013083">
    <property type="entry name" value="Znf_RING/FYVE/PHD"/>
</dbReference>
<dbReference type="InterPro" id="IPR017907">
    <property type="entry name" value="Znf_RING_CS"/>
</dbReference>
<dbReference type="PANTHER" id="PTHR24099">
    <property type="entry name" value="E3 UBIQUITIN-PROTEIN LIGASE TRIM36-RELATED"/>
    <property type="match status" value="1"/>
</dbReference>
<dbReference type="PANTHER" id="PTHR24099:SF17">
    <property type="entry name" value="TRIPARTITE MOTIF CONTAINING 55"/>
    <property type="match status" value="1"/>
</dbReference>
<dbReference type="Pfam" id="PF00643">
    <property type="entry name" value="zf-B_box"/>
    <property type="match status" value="1"/>
</dbReference>
<dbReference type="Pfam" id="PF13445">
    <property type="entry name" value="zf-RING_UBOX"/>
    <property type="match status" value="1"/>
</dbReference>
<dbReference type="SMART" id="SM00336">
    <property type="entry name" value="BBOX"/>
    <property type="match status" value="1"/>
</dbReference>
<dbReference type="SMART" id="SM00184">
    <property type="entry name" value="RING"/>
    <property type="match status" value="1"/>
</dbReference>
<dbReference type="SUPFAM" id="SSF57845">
    <property type="entry name" value="B-box zinc-binding domain"/>
    <property type="match status" value="1"/>
</dbReference>
<dbReference type="SUPFAM" id="SSF57850">
    <property type="entry name" value="RING/U-box"/>
    <property type="match status" value="1"/>
</dbReference>
<dbReference type="PROSITE" id="PS51262">
    <property type="entry name" value="COS"/>
    <property type="match status" value="1"/>
</dbReference>
<dbReference type="PROSITE" id="PS50119">
    <property type="entry name" value="ZF_BBOX"/>
    <property type="match status" value="1"/>
</dbReference>
<dbReference type="PROSITE" id="PS00518">
    <property type="entry name" value="ZF_RING_1"/>
    <property type="match status" value="1"/>
</dbReference>
<dbReference type="PROSITE" id="PS50089">
    <property type="entry name" value="ZF_RING_2"/>
    <property type="match status" value="1"/>
</dbReference>
<gene>
    <name type="primary">TRIM55</name>
    <name type="synonym">MURF2</name>
    <name type="synonym">RNF29</name>
</gene>
<name>TRI55_HUMAN</name>
<feature type="chain" id="PRO_0000056286" description="Tripartite motif-containing protein 55">
    <location>
        <begin position="1"/>
        <end position="548"/>
    </location>
</feature>
<feature type="domain" description="COS" evidence="5">
    <location>
        <begin position="269"/>
        <end position="327"/>
    </location>
</feature>
<feature type="zinc finger region" description="RING-type" evidence="4">
    <location>
        <begin position="10"/>
        <end position="66"/>
    </location>
</feature>
<feature type="zinc finger region" description="B box-type" evidence="3">
    <location>
        <begin position="103"/>
        <end position="145"/>
    </location>
</feature>
<feature type="region of interest" description="Disordered" evidence="6">
    <location>
        <begin position="326"/>
        <end position="532"/>
    </location>
</feature>
<feature type="coiled-coil region" evidence="2">
    <location>
        <begin position="168"/>
        <end position="248"/>
    </location>
</feature>
<feature type="compositionally biased region" description="Acidic residues" evidence="6">
    <location>
        <begin position="328"/>
        <end position="339"/>
    </location>
</feature>
<feature type="compositionally biased region" description="Acidic residues" evidence="6">
    <location>
        <begin position="347"/>
        <end position="360"/>
    </location>
</feature>
<feature type="compositionally biased region" description="Low complexity" evidence="6">
    <location>
        <begin position="484"/>
        <end position="496"/>
    </location>
</feature>
<feature type="compositionally biased region" description="Low complexity" evidence="6">
    <location>
        <begin position="512"/>
        <end position="531"/>
    </location>
</feature>
<feature type="binding site" evidence="3">
    <location>
        <position position="124"/>
    </location>
    <ligand>
        <name>Zn(2+)</name>
        <dbReference type="ChEBI" id="CHEBI:29105"/>
    </ligand>
</feature>
<feature type="binding site" evidence="3">
    <location>
        <position position="127"/>
    </location>
    <ligand>
        <name>Zn(2+)</name>
        <dbReference type="ChEBI" id="CHEBI:29105"/>
    </ligand>
</feature>
<feature type="binding site" evidence="3">
    <location>
        <position position="147"/>
    </location>
    <ligand>
        <name>Zn(2+)</name>
        <dbReference type="ChEBI" id="CHEBI:29105"/>
    </ligand>
</feature>
<feature type="binding site" evidence="3">
    <location>
        <position position="153"/>
    </location>
    <ligand>
        <name>Zn(2+)</name>
        <dbReference type="ChEBI" id="CHEBI:29105"/>
    </ligand>
</feature>
<feature type="splice variant" id="VSP_015996" description="In isoform 4." evidence="15">
    <location>
        <begin position="202"/>
        <end position="508"/>
    </location>
</feature>
<feature type="splice variant" id="VSP_015997" description="In isoform 2." evidence="14 15 16 17 18">
    <location>
        <begin position="412"/>
        <end position="507"/>
    </location>
</feature>
<feature type="splice variant" id="VSP_015998" description="In isoform 3." evidence="15">
    <original>IGFEAPPLQGQAAAPASGSGADSEPARHIFSFSWLNSLNE</original>
    <variation>ELVICLALLAFLILHYIWSQIQCLIFTLMDWI</variation>
    <location>
        <begin position="509"/>
        <end position="548"/>
    </location>
</feature>
<feature type="sequence variant" id="VAR_074078" description="Rare variant; found in a patient with hypertrophic cardiomyopathy; uncertain significance." evidence="10">
    <original>C</original>
    <variation>Y</variation>
    <location>
        <position position="50"/>
    </location>
</feature>
<feature type="sequence variant" id="VAR_074079" description="In dbSNP:rs1320007526." evidence="10">
    <original>I</original>
    <variation>V</variation>
    <location>
        <position position="54"/>
    </location>
</feature>
<feature type="sequence variant" id="VAR_074080" description="Rare variant; found in a patient with hypertrophic cardiomyopathy; uncertain significance; dbSNP:rs769797275." evidence="10">
    <original>P</original>
    <variation>A</variation>
    <location>
        <position position="79"/>
    </location>
</feature>
<feature type="sequence variant" id="VAR_074081" description="Rare variant; found in a patient with hypertrophic cardiomyopathy; uncertain significance." evidence="10">
    <original>L</original>
    <variation>M</variation>
    <location>
        <position position="241"/>
    </location>
</feature>
<feature type="sequence variant" id="VAR_074082" evidence="10">
    <original>S</original>
    <variation>F</variation>
    <location>
        <position position="252"/>
    </location>
</feature>
<feature type="sequence variant" id="VAR_074083" description="In dbSNP:rs61741078." evidence="10">
    <original>N</original>
    <variation>K</variation>
    <location>
        <position position="257"/>
    </location>
</feature>
<feature type="sequence variant" id="VAR_074084" description="In dbSNP:rs1279027783." evidence="10">
    <original>V</original>
    <variation>I</variation>
    <location>
        <position position="258"/>
    </location>
</feature>
<feature type="sequence variant" id="VAR_074085" description="In dbSNP:rs770907206." evidence="10">
    <original>E</original>
    <variation>Q</variation>
    <location>
        <position position="336"/>
    </location>
</feature>
<feature type="sequence variant" id="VAR_052144" description="In dbSNP:rs7843605." evidence="10">
    <original>K</original>
    <variation>R</variation>
    <location>
        <position position="343"/>
    </location>
</feature>
<feature type="sequence variant" id="VAR_074086" description="Rare variant; found in a patient with hypertrophic cardiomyopathy; uncertain significance; dbSNP:rs200545859." evidence="10">
    <original>P</original>
    <variation>T</variation>
    <location>
        <position position="392"/>
    </location>
</feature>
<feature type="sequence variant" id="VAR_074087" evidence="10">
    <original>T</original>
    <variation>I</variation>
    <location>
        <position position="418"/>
    </location>
</feature>
<feature type="sequence variant" id="VAR_074088" description="Rare variant; found in a patient with hypertrophic cardiomyopathy; uncertain significance; dbSNP:rs755876598." evidence="10">
    <original>K</original>
    <variation>N</variation>
    <location>
        <position position="452"/>
    </location>
</feature>
<feature type="sequence variant" id="VAR_074089" evidence="10">
    <original>P</original>
    <variation>L</variation>
    <location>
        <position position="458"/>
    </location>
</feature>
<feature type="sequence variant" id="VAR_074090" description="In dbSNP:rs770146015." evidence="10">
    <original>A</original>
    <variation>T</variation>
    <location>
        <position position="488"/>
    </location>
</feature>
<feature type="sequence variant" id="VAR_074091" description="Rare variant; found in a patient with hypertrophic cardiomyopathy; uncertain significance; dbSNP:rs781152511." evidence="10">
    <original>T</original>
    <variation>S</variation>
    <location>
        <position position="506"/>
    </location>
</feature>
<feature type="sequence conflict" description="In Ref. 2; CAC43019/CAC43020." evidence="19" ref="2">
    <original>E</original>
    <variation>G</variation>
    <location>
        <position position="102"/>
    </location>
</feature>
<feature type="sequence conflict" description="In Ref. 2; CAC43019/CAC43020/CAD24432." evidence="19" ref="2">
    <original>G</original>
    <variation>E</variation>
    <location>
        <position position="345"/>
    </location>
</feature>
<feature type="sequence variant" id="VAR_082913" evidence="10">
    <original>H</original>
    <variation>R</variation>
    <location sequence="Q9BYV6-3">
        <position position="523"/>
    </location>
</feature>
<sequence length="548" mass="60466">MSASLNYKSFSKEQQTMDNLEKQLICPICLEMFTKPVVILPCQHNLCRKCASDIFQASNPYLPTRGGTTMASGGRFRCPSCRHEVVLDRHGVYGLQRNLLVENIIDIYKQESTRPEKKSDQPMCEEHEEERINIYCLNCEVPTCSLCKVFGAHKDCQVAPLTHVFQRQKSELSDGIAILVGSNDRVQGVISQLEDTCKTIEECCRKQKQELCEKFDYLYGILEERKNEMTQVITRTQEEKLEHVRALIKKYSDHLENVSKLVESGIQFMDEPEMAVFLQNAKTLLKKISEASKAFQMEKIEHGYENMNHFTVNLNREEKIIREIDFYREDEDEEEEEGGEGEKEGEGEVGGEAVEVEEVENVQTEFPGEDENPEKASELSQVELQAAPGALPVSSPEPPPALPPAADAPVTQGEVVPTGSEQTTESETPVPAAAETADPLFYPSWYKGQTRKATTNPPCTPGSEGLGQIGPPGSEDSNVRKAEVAAAAASERAAVSGKETSAPAATSQIGFEAPPLQGQAAAPASGSGADSEPARHIFSFSWLNSLNE</sequence>
<keyword id="KW-0025">Alternative splicing</keyword>
<keyword id="KW-0175">Coiled coil</keyword>
<keyword id="KW-0963">Cytoplasm</keyword>
<keyword id="KW-0479">Metal-binding</keyword>
<keyword id="KW-0514">Muscle protein</keyword>
<keyword id="KW-0539">Nucleus</keyword>
<keyword id="KW-1267">Proteomics identification</keyword>
<keyword id="KW-1185">Reference proteome</keyword>
<keyword id="KW-0808">Transferase</keyword>
<keyword id="KW-0862">Zinc</keyword>
<keyword id="KW-0863">Zinc-finger</keyword>
<protein>
    <recommendedName>
        <fullName>Tripartite motif-containing protein 55</fullName>
        <ecNumber evidence="11 13">2.3.2.27</ecNumber>
    </recommendedName>
    <alternativeName>
        <fullName>Muscle-specific RING finger protein 2</fullName>
        <shortName>MuRF-2</shortName>
        <shortName>MuRF2</shortName>
    </alternativeName>
    <alternativeName>
        <fullName>RING finger protein 29</fullName>
    </alternativeName>
</protein>